<name>YBEY_CHLPM</name>
<proteinExistence type="inferred from homology"/>
<comment type="function">
    <text evidence="1">Single strand-specific metallo-endoribonuclease involved in late-stage 70S ribosome quality control and in maturation of the 3' terminus of the 16S rRNA.</text>
</comment>
<comment type="cofactor">
    <cofactor evidence="1">
        <name>Zn(2+)</name>
        <dbReference type="ChEBI" id="CHEBI:29105"/>
    </cofactor>
    <text evidence="1">Binds 1 zinc ion.</text>
</comment>
<comment type="subcellular location">
    <subcellularLocation>
        <location evidence="1">Cytoplasm</location>
    </subcellularLocation>
</comment>
<comment type="similarity">
    <text evidence="1">Belongs to the endoribonuclease YbeY family.</text>
</comment>
<keyword id="KW-0963">Cytoplasm</keyword>
<keyword id="KW-0255">Endonuclease</keyword>
<keyword id="KW-0378">Hydrolase</keyword>
<keyword id="KW-0479">Metal-binding</keyword>
<keyword id="KW-0540">Nuclease</keyword>
<keyword id="KW-0690">Ribosome biogenesis</keyword>
<keyword id="KW-0698">rRNA processing</keyword>
<keyword id="KW-0862">Zinc</keyword>
<protein>
    <recommendedName>
        <fullName evidence="1">Endoribonuclease YbeY</fullName>
        <ecNumber evidence="1">3.1.-.-</ecNumber>
    </recommendedName>
</protein>
<sequence>MTIQLHNTTRRALPEAKLKKAVRLVLSEEGGKAVSIDAIYCGGRMMRRINREFLGHDYDTDTVTFPYSEGLVVEGEFYVSLDEVGRNAVRFKSGFEQELLRVTIHSVLHLLGYDDASPEERGRMRQKEDRYLRILGAGVSSTEERSQV</sequence>
<organism>
    <name type="scientific">Chlorobium phaeovibrioides (strain DSM 265 / 1930)</name>
    <name type="common">Prosthecochloris vibrioformis (strain DSM 265)</name>
    <dbReference type="NCBI Taxonomy" id="290318"/>
    <lineage>
        <taxon>Bacteria</taxon>
        <taxon>Pseudomonadati</taxon>
        <taxon>Chlorobiota</taxon>
        <taxon>Chlorobiia</taxon>
        <taxon>Chlorobiales</taxon>
        <taxon>Chlorobiaceae</taxon>
        <taxon>Chlorobium/Pelodictyon group</taxon>
        <taxon>Chlorobium</taxon>
    </lineage>
</organism>
<feature type="chain" id="PRO_1000073911" description="Endoribonuclease YbeY">
    <location>
        <begin position="1"/>
        <end position="148"/>
    </location>
</feature>
<feature type="binding site" evidence="1">
    <location>
        <position position="105"/>
    </location>
    <ligand>
        <name>Zn(2+)</name>
        <dbReference type="ChEBI" id="CHEBI:29105"/>
        <note>catalytic</note>
    </ligand>
</feature>
<feature type="binding site" evidence="1">
    <location>
        <position position="109"/>
    </location>
    <ligand>
        <name>Zn(2+)</name>
        <dbReference type="ChEBI" id="CHEBI:29105"/>
        <note>catalytic</note>
    </ligand>
</feature>
<feature type="binding site" evidence="1">
    <location>
        <position position="115"/>
    </location>
    <ligand>
        <name>Zn(2+)</name>
        <dbReference type="ChEBI" id="CHEBI:29105"/>
        <note>catalytic</note>
    </ligand>
</feature>
<gene>
    <name evidence="1" type="primary">ybeY</name>
    <name type="ordered locus">Cvib_0701</name>
</gene>
<dbReference type="EC" id="3.1.-.-" evidence="1"/>
<dbReference type="EMBL" id="CP000607">
    <property type="protein sequence ID" value="ABP36716.1"/>
    <property type="molecule type" value="Genomic_DNA"/>
</dbReference>
<dbReference type="SMR" id="A4SE07"/>
<dbReference type="STRING" id="290318.Cvib_0701"/>
<dbReference type="KEGG" id="pvi:Cvib_0701"/>
<dbReference type="eggNOG" id="COG0319">
    <property type="taxonomic scope" value="Bacteria"/>
</dbReference>
<dbReference type="HOGENOM" id="CLU_106710_3_3_10"/>
<dbReference type="OrthoDB" id="9811984at2"/>
<dbReference type="GO" id="GO:0005737">
    <property type="term" value="C:cytoplasm"/>
    <property type="evidence" value="ECO:0007669"/>
    <property type="project" value="UniProtKB-SubCell"/>
</dbReference>
<dbReference type="GO" id="GO:0004222">
    <property type="term" value="F:metalloendopeptidase activity"/>
    <property type="evidence" value="ECO:0007669"/>
    <property type="project" value="InterPro"/>
</dbReference>
<dbReference type="GO" id="GO:0004521">
    <property type="term" value="F:RNA endonuclease activity"/>
    <property type="evidence" value="ECO:0007669"/>
    <property type="project" value="UniProtKB-UniRule"/>
</dbReference>
<dbReference type="GO" id="GO:0008270">
    <property type="term" value="F:zinc ion binding"/>
    <property type="evidence" value="ECO:0007669"/>
    <property type="project" value="UniProtKB-UniRule"/>
</dbReference>
<dbReference type="GO" id="GO:0006364">
    <property type="term" value="P:rRNA processing"/>
    <property type="evidence" value="ECO:0007669"/>
    <property type="project" value="UniProtKB-UniRule"/>
</dbReference>
<dbReference type="Gene3D" id="3.40.390.30">
    <property type="entry name" value="Metalloproteases ('zincins'), catalytic domain"/>
    <property type="match status" value="1"/>
</dbReference>
<dbReference type="HAMAP" id="MF_00009">
    <property type="entry name" value="Endoribonucl_YbeY"/>
    <property type="match status" value="1"/>
</dbReference>
<dbReference type="InterPro" id="IPR023091">
    <property type="entry name" value="MetalPrtase_cat_dom_sf_prd"/>
</dbReference>
<dbReference type="InterPro" id="IPR002036">
    <property type="entry name" value="YbeY"/>
</dbReference>
<dbReference type="InterPro" id="IPR020549">
    <property type="entry name" value="YbeY_CS"/>
</dbReference>
<dbReference type="NCBIfam" id="TIGR00043">
    <property type="entry name" value="rRNA maturation RNase YbeY"/>
    <property type="match status" value="1"/>
</dbReference>
<dbReference type="Pfam" id="PF02130">
    <property type="entry name" value="YbeY"/>
    <property type="match status" value="1"/>
</dbReference>
<dbReference type="SUPFAM" id="SSF55486">
    <property type="entry name" value="Metalloproteases ('zincins'), catalytic domain"/>
    <property type="match status" value="1"/>
</dbReference>
<dbReference type="PROSITE" id="PS01306">
    <property type="entry name" value="UPF0054"/>
    <property type="match status" value="1"/>
</dbReference>
<accession>A4SE07</accession>
<reference key="1">
    <citation type="submission" date="2007-03" db="EMBL/GenBank/DDBJ databases">
        <title>Complete sequence of Prosthecochloris vibrioformis DSM 265.</title>
        <authorList>
            <consortium name="US DOE Joint Genome Institute"/>
            <person name="Copeland A."/>
            <person name="Lucas S."/>
            <person name="Lapidus A."/>
            <person name="Barry K."/>
            <person name="Detter J.C."/>
            <person name="Glavina del Rio T."/>
            <person name="Hammon N."/>
            <person name="Israni S."/>
            <person name="Pitluck S."/>
            <person name="Schmutz J."/>
            <person name="Larimer F."/>
            <person name="Land M."/>
            <person name="Hauser L."/>
            <person name="Mikhailova N."/>
            <person name="Li T."/>
            <person name="Overmann J."/>
            <person name="Schuster S.C."/>
            <person name="Bryant D.A."/>
            <person name="Richardson P."/>
        </authorList>
    </citation>
    <scope>NUCLEOTIDE SEQUENCE [LARGE SCALE GENOMIC DNA]</scope>
    <source>
        <strain>DSM 265 / 1930</strain>
    </source>
</reference>
<evidence type="ECO:0000255" key="1">
    <source>
        <dbReference type="HAMAP-Rule" id="MF_00009"/>
    </source>
</evidence>